<dbReference type="EC" id="4.1.1.37" evidence="1"/>
<dbReference type="EMBL" id="CP001139">
    <property type="protein sequence ID" value="ACH66416.1"/>
    <property type="molecule type" value="Genomic_DNA"/>
</dbReference>
<dbReference type="RefSeq" id="WP_005421300.1">
    <property type="nucleotide sequence ID" value="NC_011184.1"/>
</dbReference>
<dbReference type="SMR" id="B5FC78"/>
<dbReference type="GeneID" id="54165119"/>
<dbReference type="KEGG" id="vfm:VFMJ11_2520"/>
<dbReference type="HOGENOM" id="CLU_040933_0_0_6"/>
<dbReference type="UniPathway" id="UPA00251">
    <property type="reaction ID" value="UER00321"/>
</dbReference>
<dbReference type="Proteomes" id="UP000001857">
    <property type="component" value="Chromosome I"/>
</dbReference>
<dbReference type="GO" id="GO:0005829">
    <property type="term" value="C:cytosol"/>
    <property type="evidence" value="ECO:0007669"/>
    <property type="project" value="TreeGrafter"/>
</dbReference>
<dbReference type="GO" id="GO:0004853">
    <property type="term" value="F:uroporphyrinogen decarboxylase activity"/>
    <property type="evidence" value="ECO:0007669"/>
    <property type="project" value="UniProtKB-UniRule"/>
</dbReference>
<dbReference type="GO" id="GO:0019353">
    <property type="term" value="P:protoporphyrinogen IX biosynthetic process from glutamate"/>
    <property type="evidence" value="ECO:0007669"/>
    <property type="project" value="TreeGrafter"/>
</dbReference>
<dbReference type="CDD" id="cd00717">
    <property type="entry name" value="URO-D"/>
    <property type="match status" value="1"/>
</dbReference>
<dbReference type="FunFam" id="3.20.20.210:FF:000001">
    <property type="entry name" value="Uroporphyrinogen decarboxylase"/>
    <property type="match status" value="1"/>
</dbReference>
<dbReference type="Gene3D" id="3.20.20.210">
    <property type="match status" value="1"/>
</dbReference>
<dbReference type="HAMAP" id="MF_00218">
    <property type="entry name" value="URO_D"/>
    <property type="match status" value="1"/>
</dbReference>
<dbReference type="InterPro" id="IPR038071">
    <property type="entry name" value="UROD/MetE-like_sf"/>
</dbReference>
<dbReference type="InterPro" id="IPR006361">
    <property type="entry name" value="Uroporphyrinogen_deCO2ase_HemE"/>
</dbReference>
<dbReference type="InterPro" id="IPR000257">
    <property type="entry name" value="Uroporphyrinogen_deCOase"/>
</dbReference>
<dbReference type="NCBIfam" id="TIGR01464">
    <property type="entry name" value="hemE"/>
    <property type="match status" value="1"/>
</dbReference>
<dbReference type="PANTHER" id="PTHR21091">
    <property type="entry name" value="METHYLTETRAHYDROFOLATE:HOMOCYSTEINE METHYLTRANSFERASE RELATED"/>
    <property type="match status" value="1"/>
</dbReference>
<dbReference type="PANTHER" id="PTHR21091:SF169">
    <property type="entry name" value="UROPORPHYRINOGEN DECARBOXYLASE"/>
    <property type="match status" value="1"/>
</dbReference>
<dbReference type="Pfam" id="PF01208">
    <property type="entry name" value="URO-D"/>
    <property type="match status" value="1"/>
</dbReference>
<dbReference type="SUPFAM" id="SSF51726">
    <property type="entry name" value="UROD/MetE-like"/>
    <property type="match status" value="1"/>
</dbReference>
<dbReference type="PROSITE" id="PS00906">
    <property type="entry name" value="UROD_1"/>
    <property type="match status" value="1"/>
</dbReference>
<dbReference type="PROSITE" id="PS00907">
    <property type="entry name" value="UROD_2"/>
    <property type="match status" value="1"/>
</dbReference>
<keyword id="KW-0963">Cytoplasm</keyword>
<keyword id="KW-0210">Decarboxylase</keyword>
<keyword id="KW-0456">Lyase</keyword>
<keyword id="KW-0627">Porphyrin biosynthesis</keyword>
<evidence type="ECO:0000255" key="1">
    <source>
        <dbReference type="HAMAP-Rule" id="MF_00218"/>
    </source>
</evidence>
<sequence>MTELKNDRYLRALLKQPVDYTPVWMMRQAGRYLPEYKATRAEAGDFMSLCKNAELASEVTLQPLRRFPLDAAILFSDILTIPDAMGLGLYFETGEGPKFERPITCKADVDKIGLPDPEGELQYVMNAVRQIRKDLKGEVPLIGFSGSPWTLATYMVEGGSSKAFTKIKKMMYAEPATLHLLLDKLADSVIEYLNAQIKAGAQSVMVFDTWGGVLTPRDYNEFSLRYMHKIVDGLIRENEGRRVPVTLFTKNGGMWLESIAATGCDAVGLDWTINIADAKARIGDKVALQGNMDPSILYAQPERIRQEVGTILEGFGDAGTGHVFNLGHGIHLDVPPENAGVFVDAVHDLSKPYHK</sequence>
<proteinExistence type="inferred from homology"/>
<organism>
    <name type="scientific">Aliivibrio fischeri (strain MJ11)</name>
    <name type="common">Vibrio fischeri</name>
    <dbReference type="NCBI Taxonomy" id="388396"/>
    <lineage>
        <taxon>Bacteria</taxon>
        <taxon>Pseudomonadati</taxon>
        <taxon>Pseudomonadota</taxon>
        <taxon>Gammaproteobacteria</taxon>
        <taxon>Vibrionales</taxon>
        <taxon>Vibrionaceae</taxon>
        <taxon>Aliivibrio</taxon>
    </lineage>
</organism>
<feature type="chain" id="PRO_1000100023" description="Uroporphyrinogen decarboxylase">
    <location>
        <begin position="1"/>
        <end position="355"/>
    </location>
</feature>
<feature type="binding site" evidence="1">
    <location>
        <begin position="27"/>
        <end position="31"/>
    </location>
    <ligand>
        <name>substrate</name>
    </ligand>
</feature>
<feature type="binding site" evidence="1">
    <location>
        <position position="77"/>
    </location>
    <ligand>
        <name>substrate</name>
    </ligand>
</feature>
<feature type="binding site" evidence="1">
    <location>
        <position position="154"/>
    </location>
    <ligand>
        <name>substrate</name>
    </ligand>
</feature>
<feature type="binding site" evidence="1">
    <location>
        <position position="209"/>
    </location>
    <ligand>
        <name>substrate</name>
    </ligand>
</feature>
<feature type="binding site" evidence="1">
    <location>
        <position position="328"/>
    </location>
    <ligand>
        <name>substrate</name>
    </ligand>
</feature>
<feature type="site" description="Transition state stabilizer" evidence="1">
    <location>
        <position position="77"/>
    </location>
</feature>
<reference key="1">
    <citation type="submission" date="2008-08" db="EMBL/GenBank/DDBJ databases">
        <title>Complete sequence of Vibrio fischeri strain MJ11.</title>
        <authorList>
            <person name="Mandel M.J."/>
            <person name="Stabb E.V."/>
            <person name="Ruby E.G."/>
            <person name="Ferriera S."/>
            <person name="Johnson J."/>
            <person name="Kravitz S."/>
            <person name="Beeson K."/>
            <person name="Sutton G."/>
            <person name="Rogers Y.-H."/>
            <person name="Friedman R."/>
            <person name="Frazier M."/>
            <person name="Venter J.C."/>
        </authorList>
    </citation>
    <scope>NUCLEOTIDE SEQUENCE [LARGE SCALE GENOMIC DNA]</scope>
    <source>
        <strain>MJ11</strain>
    </source>
</reference>
<comment type="function">
    <text evidence="1">Catalyzes the decarboxylation of four acetate groups of uroporphyrinogen-III to yield coproporphyrinogen-III.</text>
</comment>
<comment type="catalytic activity">
    <reaction evidence="1">
        <text>uroporphyrinogen III + 4 H(+) = coproporphyrinogen III + 4 CO2</text>
        <dbReference type="Rhea" id="RHEA:19865"/>
        <dbReference type="ChEBI" id="CHEBI:15378"/>
        <dbReference type="ChEBI" id="CHEBI:16526"/>
        <dbReference type="ChEBI" id="CHEBI:57308"/>
        <dbReference type="ChEBI" id="CHEBI:57309"/>
        <dbReference type="EC" id="4.1.1.37"/>
    </reaction>
</comment>
<comment type="pathway">
    <text evidence="1">Porphyrin-containing compound metabolism; protoporphyrin-IX biosynthesis; coproporphyrinogen-III from 5-aminolevulinate: step 4/4.</text>
</comment>
<comment type="subunit">
    <text evidence="1">Homodimer.</text>
</comment>
<comment type="subcellular location">
    <subcellularLocation>
        <location evidence="1">Cytoplasm</location>
    </subcellularLocation>
</comment>
<comment type="similarity">
    <text evidence="1">Belongs to the uroporphyrinogen decarboxylase family.</text>
</comment>
<gene>
    <name evidence="1" type="primary">hemE</name>
    <name type="ordered locus">VFMJ11_2520</name>
</gene>
<name>DCUP_ALIFM</name>
<accession>B5FC78</accession>
<protein>
    <recommendedName>
        <fullName evidence="1">Uroporphyrinogen decarboxylase</fullName>
        <shortName evidence="1">UPD</shortName>
        <shortName evidence="1">URO-D</shortName>
        <ecNumber evidence="1">4.1.1.37</ecNumber>
    </recommendedName>
</protein>